<name>EID2B_HUMAN</name>
<organism>
    <name type="scientific">Homo sapiens</name>
    <name type="common">Human</name>
    <dbReference type="NCBI Taxonomy" id="9606"/>
    <lineage>
        <taxon>Eukaryota</taxon>
        <taxon>Metazoa</taxon>
        <taxon>Chordata</taxon>
        <taxon>Craniata</taxon>
        <taxon>Vertebrata</taxon>
        <taxon>Euteleostomi</taxon>
        <taxon>Mammalia</taxon>
        <taxon>Eutheria</taxon>
        <taxon>Euarchontoglires</taxon>
        <taxon>Primates</taxon>
        <taxon>Haplorrhini</taxon>
        <taxon>Catarrhini</taxon>
        <taxon>Hominidae</taxon>
        <taxon>Homo</taxon>
    </lineage>
</organism>
<feature type="chain" id="PRO_0000315903" description="EP300-interacting inhibitor of differentiation 2B">
    <location>
        <begin position="1"/>
        <end position="161"/>
    </location>
</feature>
<feature type="region of interest" description="Disordered" evidence="1">
    <location>
        <begin position="1"/>
        <end position="26"/>
    </location>
</feature>
<feature type="region of interest" description="Disordered" evidence="1">
    <location>
        <begin position="54"/>
        <end position="77"/>
    </location>
</feature>
<sequence length="161" mass="16985">MAEPTGLLEMSELPGDSSVPQVGTASGVSDVLRGAVGGGVRVQEAREGPVAEAARSMARMPGPVPGPIPSSVPGLASAPDPHQQLAFLEINRQLLFREYLDGSSMIPVRLLRDFEERRRLFVEGCKAREAAFDADPPQMDFAAVAFTVALTASEALSPLAD</sequence>
<proteinExistence type="evidence at protein level"/>
<evidence type="ECO:0000256" key="1">
    <source>
        <dbReference type="SAM" id="MobiDB-lite"/>
    </source>
</evidence>
<evidence type="ECO:0000269" key="2">
    <source>
    </source>
</evidence>
<evidence type="ECO:0000269" key="3">
    <source>
    </source>
</evidence>
<evidence type="ECO:0000303" key="4">
    <source>
    </source>
</evidence>
<evidence type="ECO:0000305" key="5"/>
<evidence type="ECO:0000312" key="6">
    <source>
        <dbReference type="EMBL" id="AAH09725.2"/>
    </source>
</evidence>
<evidence type="ECO:0000312" key="7">
    <source>
        <dbReference type="EMBL" id="BAC04743.1"/>
    </source>
</evidence>
<evidence type="ECO:0000312" key="8">
    <source>
        <dbReference type="EMBL" id="EAW56908.1"/>
    </source>
</evidence>
<gene>
    <name evidence="6" type="primary">EID2B</name>
    <name evidence="4" type="synonym">EID3</name>
</gene>
<protein>
    <recommendedName>
        <fullName>EP300-interacting inhibitor of differentiation 2B</fullName>
        <shortName>EID-2B</shortName>
    </recommendedName>
    <alternativeName>
        <fullName>EID-2-like inhibitor of differentiation 3</fullName>
        <shortName>EID-3</shortName>
    </alternativeName>
</protein>
<comment type="function">
    <text evidence="3">Acts as a repressor of MYOD-dependent transcription, glucocorticoid receptor-dependent transcription, and muscle differentiation.</text>
</comment>
<comment type="subunit">
    <text evidence="3">Homodimer and heterodimer with EID2. Interacts with HDAC1 and HDAC2.</text>
</comment>
<comment type="interaction">
    <interactant intactId="EBI-724968">
        <id>Q96D98</id>
    </interactant>
    <interactant intactId="EBI-2117357">
        <id>P15289</id>
        <label>ARSA</label>
    </interactant>
    <organismsDiffer>false</organismsDiffer>
    <experiments>3</experiments>
</comment>
<comment type="interaction">
    <interactant intactId="EBI-724968">
        <id>Q96D98</id>
    </interactant>
    <interactant intactId="EBI-11962928">
        <id>Q9UI47-2</id>
        <label>CTNNA3</label>
    </interactant>
    <organismsDiffer>false</organismsDiffer>
    <experiments>3</experiments>
</comment>
<comment type="interaction">
    <interactant intactId="EBI-724968">
        <id>Q96D98</id>
    </interactant>
    <interactant intactId="EBI-5525894">
        <id>Q8N6I1</id>
        <label>EID2</label>
    </interactant>
    <organismsDiffer>false</organismsDiffer>
    <experiments>2</experiments>
</comment>
<comment type="interaction">
    <interactant intactId="EBI-724968">
        <id>Q96D98</id>
    </interactant>
    <interactant intactId="EBI-724968">
        <id>Q96D98</id>
        <label>EID2B</label>
    </interactant>
    <organismsDiffer>false</organismsDiffer>
    <experiments>2</experiments>
</comment>
<comment type="interaction">
    <interactant intactId="EBI-724968">
        <id>Q96D98</id>
    </interactant>
    <interactant intactId="EBI-301834">
        <id>Q13547</id>
        <label>HDAC1</label>
    </interactant>
    <organismsDiffer>false</organismsDiffer>
    <experiments>2</experiments>
</comment>
<comment type="interaction">
    <interactant intactId="EBI-724968">
        <id>Q96D98</id>
    </interactant>
    <interactant intactId="EBI-949966">
        <id>Q9HCI5</id>
        <label>MAGEE1</label>
    </interactant>
    <organismsDiffer>false</organismsDiffer>
    <experiments>6</experiments>
</comment>
<comment type="interaction">
    <interactant intactId="EBI-724968">
        <id>Q96D98</id>
    </interactant>
    <interactant intactId="EBI-1389308">
        <id>Q7Z3K3</id>
        <label>POGZ</label>
    </interactant>
    <organismsDiffer>false</organismsDiffer>
    <experiments>3</experiments>
</comment>
<comment type="subcellular location">
    <subcellularLocation>
        <location evidence="3">Nucleus</location>
    </subcellularLocation>
</comment>
<comment type="domain">
    <text evidence="3">The C-terminal portion of EID2B is required for nuclear localization.</text>
</comment>
<accession>Q96D98</accession>
<accession>Q8N8S0</accession>
<dbReference type="EMBL" id="AK096263">
    <property type="protein sequence ID" value="BAC04743.1"/>
    <property type="molecule type" value="mRNA"/>
</dbReference>
<dbReference type="EMBL" id="CH471126">
    <property type="protein sequence ID" value="EAW56908.1"/>
    <property type="molecule type" value="Genomic_DNA"/>
</dbReference>
<dbReference type="EMBL" id="BC009725">
    <property type="protein sequence ID" value="AAH09725.2"/>
    <property type="molecule type" value="mRNA"/>
</dbReference>
<dbReference type="CCDS" id="CCDS12539.1"/>
<dbReference type="RefSeq" id="NP_689574.1">
    <property type="nucleotide sequence ID" value="NM_152361.3"/>
</dbReference>
<dbReference type="BioGRID" id="125972">
    <property type="interactions" value="67"/>
</dbReference>
<dbReference type="FunCoup" id="Q96D98">
    <property type="interactions" value="336"/>
</dbReference>
<dbReference type="IntAct" id="Q96D98">
    <property type="interactions" value="11"/>
</dbReference>
<dbReference type="STRING" id="9606.ENSP00000317564"/>
<dbReference type="iPTMnet" id="Q96D98"/>
<dbReference type="PhosphoSitePlus" id="Q96D98"/>
<dbReference type="BioMuta" id="EID2B"/>
<dbReference type="DMDM" id="74731428"/>
<dbReference type="MassIVE" id="Q96D98"/>
<dbReference type="PaxDb" id="9606-ENSP00000317564"/>
<dbReference type="PeptideAtlas" id="Q96D98"/>
<dbReference type="Antibodypedia" id="65436">
    <property type="antibodies" value="10 antibodies from 9 providers"/>
</dbReference>
<dbReference type="DNASU" id="126272"/>
<dbReference type="Ensembl" id="ENST00000326282.5">
    <property type="protein sequence ID" value="ENSP00000317564.4"/>
    <property type="gene ID" value="ENSG00000176401.6"/>
</dbReference>
<dbReference type="GeneID" id="126272"/>
<dbReference type="KEGG" id="hsa:126272"/>
<dbReference type="MANE-Select" id="ENST00000326282.5">
    <property type="protein sequence ID" value="ENSP00000317564.4"/>
    <property type="RefSeq nucleotide sequence ID" value="NM_152361.3"/>
    <property type="RefSeq protein sequence ID" value="NP_689574.1"/>
</dbReference>
<dbReference type="UCSC" id="uc002olz.1">
    <property type="organism name" value="human"/>
</dbReference>
<dbReference type="AGR" id="HGNC:26796"/>
<dbReference type="CTD" id="126272"/>
<dbReference type="GeneCards" id="EID2B"/>
<dbReference type="HGNC" id="HGNC:26796">
    <property type="gene designation" value="EID2B"/>
</dbReference>
<dbReference type="HPA" id="ENSG00000176401">
    <property type="expression patterns" value="Tissue enhanced (brain)"/>
</dbReference>
<dbReference type="MIM" id="617355">
    <property type="type" value="gene"/>
</dbReference>
<dbReference type="neXtProt" id="NX_Q96D98"/>
<dbReference type="OpenTargets" id="ENSG00000176401"/>
<dbReference type="PharmGKB" id="PA162384551"/>
<dbReference type="VEuPathDB" id="HostDB:ENSG00000176401"/>
<dbReference type="eggNOG" id="ENOG502TGX1">
    <property type="taxonomic scope" value="Eukaryota"/>
</dbReference>
<dbReference type="GeneTree" id="ENSGT00940000154796"/>
<dbReference type="HOGENOM" id="CLU_1721807_0_0_1"/>
<dbReference type="InParanoid" id="Q96D98"/>
<dbReference type="OMA" id="DANPPQM"/>
<dbReference type="OrthoDB" id="9539848at2759"/>
<dbReference type="PAN-GO" id="Q96D98">
    <property type="GO annotations" value="3 GO annotations based on evolutionary models"/>
</dbReference>
<dbReference type="PhylomeDB" id="Q96D98"/>
<dbReference type="TreeFam" id="TF337633"/>
<dbReference type="PathwayCommons" id="Q96D98"/>
<dbReference type="SignaLink" id="Q96D98"/>
<dbReference type="BioGRID-ORCS" id="126272">
    <property type="hits" value="26 hits in 1156 CRISPR screens"/>
</dbReference>
<dbReference type="ChiTaRS" id="EID2B">
    <property type="organism name" value="human"/>
</dbReference>
<dbReference type="GenomeRNAi" id="126272"/>
<dbReference type="Pharos" id="Q96D98">
    <property type="development level" value="Tdark"/>
</dbReference>
<dbReference type="PRO" id="PR:Q96D98"/>
<dbReference type="Proteomes" id="UP000005640">
    <property type="component" value="Chromosome 19"/>
</dbReference>
<dbReference type="RNAct" id="Q96D98">
    <property type="molecule type" value="protein"/>
</dbReference>
<dbReference type="Bgee" id="ENSG00000176401">
    <property type="expression patterns" value="Expressed in male germ line stem cell (sensu Vertebrata) in testis and 143 other cell types or tissues"/>
</dbReference>
<dbReference type="GO" id="GO:0005654">
    <property type="term" value="C:nucleoplasm"/>
    <property type="evidence" value="ECO:0000318"/>
    <property type="project" value="GO_Central"/>
</dbReference>
<dbReference type="GO" id="GO:0005634">
    <property type="term" value="C:nucleus"/>
    <property type="evidence" value="ECO:0000315"/>
    <property type="project" value="UniProtKB"/>
</dbReference>
<dbReference type="GO" id="GO:0042802">
    <property type="term" value="F:identical protein binding"/>
    <property type="evidence" value="ECO:0000353"/>
    <property type="project" value="IntAct"/>
</dbReference>
<dbReference type="GO" id="GO:0003714">
    <property type="term" value="F:transcription corepressor activity"/>
    <property type="evidence" value="ECO:0000318"/>
    <property type="project" value="GO_Central"/>
</dbReference>
<dbReference type="GO" id="GO:0030154">
    <property type="term" value="P:cell differentiation"/>
    <property type="evidence" value="ECO:0007669"/>
    <property type="project" value="UniProtKB-KW"/>
</dbReference>
<dbReference type="GO" id="GO:0007517">
    <property type="term" value="P:muscle organ development"/>
    <property type="evidence" value="ECO:0007669"/>
    <property type="project" value="UniProtKB-KW"/>
</dbReference>
<dbReference type="GO" id="GO:0045892">
    <property type="term" value="P:negative regulation of DNA-templated transcription"/>
    <property type="evidence" value="ECO:0000314"/>
    <property type="project" value="UniProtKB"/>
</dbReference>
<dbReference type="GO" id="GO:0045662">
    <property type="term" value="P:negative regulation of myoblast differentiation"/>
    <property type="evidence" value="ECO:0000314"/>
    <property type="project" value="UniProtKB"/>
</dbReference>
<dbReference type="InterPro" id="IPR033258">
    <property type="entry name" value="EID"/>
</dbReference>
<dbReference type="PANTHER" id="PTHR15556">
    <property type="entry name" value="EP300-INTERACTING INHIBITOR OF DIFFERENTIATION 2-RELATED"/>
    <property type="match status" value="1"/>
</dbReference>
<dbReference type="PANTHER" id="PTHR15556:SF4">
    <property type="entry name" value="EP300-INTERACTING INHIBITOR OF DIFFERENTIATION 2B"/>
    <property type="match status" value="1"/>
</dbReference>
<reference evidence="7" key="1">
    <citation type="journal article" date="2004" name="Nat. Genet.">
        <title>Complete sequencing and characterization of 21,243 full-length human cDNAs.</title>
        <authorList>
            <person name="Ota T."/>
            <person name="Suzuki Y."/>
            <person name="Nishikawa T."/>
            <person name="Otsuki T."/>
            <person name="Sugiyama T."/>
            <person name="Irie R."/>
            <person name="Wakamatsu A."/>
            <person name="Hayashi K."/>
            <person name="Sato H."/>
            <person name="Nagai K."/>
            <person name="Kimura K."/>
            <person name="Makita H."/>
            <person name="Sekine M."/>
            <person name="Obayashi M."/>
            <person name="Nishi T."/>
            <person name="Shibahara T."/>
            <person name="Tanaka T."/>
            <person name="Ishii S."/>
            <person name="Yamamoto J."/>
            <person name="Saito K."/>
            <person name="Kawai Y."/>
            <person name="Isono Y."/>
            <person name="Nakamura Y."/>
            <person name="Nagahari K."/>
            <person name="Murakami K."/>
            <person name="Yasuda T."/>
            <person name="Iwayanagi T."/>
            <person name="Wagatsuma M."/>
            <person name="Shiratori A."/>
            <person name="Sudo H."/>
            <person name="Hosoiri T."/>
            <person name="Kaku Y."/>
            <person name="Kodaira H."/>
            <person name="Kondo H."/>
            <person name="Sugawara M."/>
            <person name="Takahashi M."/>
            <person name="Kanda K."/>
            <person name="Yokoi T."/>
            <person name="Furuya T."/>
            <person name="Kikkawa E."/>
            <person name="Omura Y."/>
            <person name="Abe K."/>
            <person name="Kamihara K."/>
            <person name="Katsuta N."/>
            <person name="Sato K."/>
            <person name="Tanikawa M."/>
            <person name="Yamazaki M."/>
            <person name="Ninomiya K."/>
            <person name="Ishibashi T."/>
            <person name="Yamashita H."/>
            <person name="Murakawa K."/>
            <person name="Fujimori K."/>
            <person name="Tanai H."/>
            <person name="Kimata M."/>
            <person name="Watanabe M."/>
            <person name="Hiraoka S."/>
            <person name="Chiba Y."/>
            <person name="Ishida S."/>
            <person name="Ono Y."/>
            <person name="Takiguchi S."/>
            <person name="Watanabe S."/>
            <person name="Yosida M."/>
            <person name="Hotuta T."/>
            <person name="Kusano J."/>
            <person name="Kanehori K."/>
            <person name="Takahashi-Fujii A."/>
            <person name="Hara H."/>
            <person name="Tanase T.-O."/>
            <person name="Nomura Y."/>
            <person name="Togiya S."/>
            <person name="Komai F."/>
            <person name="Hara R."/>
            <person name="Takeuchi K."/>
            <person name="Arita M."/>
            <person name="Imose N."/>
            <person name="Musashino K."/>
            <person name="Yuuki H."/>
            <person name="Oshima A."/>
            <person name="Sasaki N."/>
            <person name="Aotsuka S."/>
            <person name="Yoshikawa Y."/>
            <person name="Matsunawa H."/>
            <person name="Ichihara T."/>
            <person name="Shiohata N."/>
            <person name="Sano S."/>
            <person name="Moriya S."/>
            <person name="Momiyama H."/>
            <person name="Satoh N."/>
            <person name="Takami S."/>
            <person name="Terashima Y."/>
            <person name="Suzuki O."/>
            <person name="Nakagawa S."/>
            <person name="Senoh A."/>
            <person name="Mizoguchi H."/>
            <person name="Goto Y."/>
            <person name="Shimizu F."/>
            <person name="Wakebe H."/>
            <person name="Hishigaki H."/>
            <person name="Watanabe T."/>
            <person name="Sugiyama A."/>
            <person name="Takemoto M."/>
            <person name="Kawakami B."/>
            <person name="Yamazaki M."/>
            <person name="Watanabe K."/>
            <person name="Kumagai A."/>
            <person name="Itakura S."/>
            <person name="Fukuzumi Y."/>
            <person name="Fujimori Y."/>
            <person name="Komiyama M."/>
            <person name="Tashiro H."/>
            <person name="Tanigami A."/>
            <person name="Fujiwara T."/>
            <person name="Ono T."/>
            <person name="Yamada K."/>
            <person name="Fujii Y."/>
            <person name="Ozaki K."/>
            <person name="Hirao M."/>
            <person name="Ohmori Y."/>
            <person name="Kawabata A."/>
            <person name="Hikiji T."/>
            <person name="Kobatake N."/>
            <person name="Inagaki H."/>
            <person name="Ikema Y."/>
            <person name="Okamoto S."/>
            <person name="Okitani R."/>
            <person name="Kawakami T."/>
            <person name="Noguchi S."/>
            <person name="Itoh T."/>
            <person name="Shigeta K."/>
            <person name="Senba T."/>
            <person name="Matsumura K."/>
            <person name="Nakajima Y."/>
            <person name="Mizuno T."/>
            <person name="Morinaga M."/>
            <person name="Sasaki M."/>
            <person name="Togashi T."/>
            <person name="Oyama M."/>
            <person name="Hata H."/>
            <person name="Watanabe M."/>
            <person name="Komatsu T."/>
            <person name="Mizushima-Sugano J."/>
            <person name="Satoh T."/>
            <person name="Shirai Y."/>
            <person name="Takahashi Y."/>
            <person name="Nakagawa K."/>
            <person name="Okumura K."/>
            <person name="Nagase T."/>
            <person name="Nomura N."/>
            <person name="Kikuchi H."/>
            <person name="Masuho Y."/>
            <person name="Yamashita R."/>
            <person name="Nakai K."/>
            <person name="Yada T."/>
            <person name="Nakamura Y."/>
            <person name="Ohara O."/>
            <person name="Isogai T."/>
            <person name="Sugano S."/>
        </authorList>
    </citation>
    <scope>NUCLEOTIDE SEQUENCE [LARGE SCALE MRNA]</scope>
    <source>
        <tissue evidence="2">Teratocarcinoma</tissue>
    </source>
</reference>
<reference evidence="8" key="2">
    <citation type="submission" date="2005-07" db="EMBL/GenBank/DDBJ databases">
        <authorList>
            <person name="Mural R.J."/>
            <person name="Istrail S."/>
            <person name="Sutton G.G."/>
            <person name="Florea L."/>
            <person name="Halpern A.L."/>
            <person name="Mobarry C.M."/>
            <person name="Lippert R."/>
            <person name="Walenz B."/>
            <person name="Shatkay H."/>
            <person name="Dew I."/>
            <person name="Miller J.R."/>
            <person name="Flanigan M.J."/>
            <person name="Edwards N.J."/>
            <person name="Bolanos R."/>
            <person name="Fasulo D."/>
            <person name="Halldorsson B.V."/>
            <person name="Hannenhalli S."/>
            <person name="Turner R."/>
            <person name="Yooseph S."/>
            <person name="Lu F."/>
            <person name="Nusskern D.R."/>
            <person name="Shue B.C."/>
            <person name="Zheng X.H."/>
            <person name="Zhong F."/>
            <person name="Delcher A.L."/>
            <person name="Huson D.H."/>
            <person name="Kravitz S.A."/>
            <person name="Mouchard L."/>
            <person name="Reinert K."/>
            <person name="Remington K.A."/>
            <person name="Clark A.G."/>
            <person name="Waterman M.S."/>
            <person name="Eichler E.E."/>
            <person name="Adams M.D."/>
            <person name="Hunkapiller M.W."/>
            <person name="Myers E.W."/>
            <person name="Venter J.C."/>
        </authorList>
    </citation>
    <scope>NUCLEOTIDE SEQUENCE [LARGE SCALE GENOMIC DNA]</scope>
</reference>
<reference evidence="6" key="3">
    <citation type="journal article" date="2004" name="Genome Res.">
        <title>The status, quality, and expansion of the NIH full-length cDNA project: the Mammalian Gene Collection (MGC).</title>
        <authorList>
            <consortium name="The MGC Project Team"/>
        </authorList>
    </citation>
    <scope>NUCLEOTIDE SEQUENCE [LARGE SCALE MRNA]</scope>
    <source>
        <tissue evidence="6">Pancreas</tissue>
    </source>
</reference>
<reference evidence="5" key="4">
    <citation type="journal article" date="2005" name="Biochem. Biophys. Res. Commun.">
        <title>A novel EID family member, EID-3, inhibits differentiation and forms a homodimer or heterodimer with EID-2.</title>
        <authorList>
            <person name="Sasajima Y."/>
            <person name="Tanaka H."/>
            <person name="Miyake S."/>
            <person name="Yuasa Y."/>
        </authorList>
    </citation>
    <scope>NUCLEOTIDE SEQUENCE [MRNA] OF 10-161</scope>
    <scope>FUNCTION</scope>
    <scope>INTERACTION WITH HDAC1 AND HDAC2</scope>
    <scope>SUBUNIT</scope>
    <scope>SUBCELLULAR LOCATION</scope>
    <scope>DOMAIN</scope>
</reference>
<keyword id="KW-0217">Developmental protein</keyword>
<keyword id="KW-0221">Differentiation</keyword>
<keyword id="KW-0517">Myogenesis</keyword>
<keyword id="KW-0539">Nucleus</keyword>
<keyword id="KW-1267">Proteomics identification</keyword>
<keyword id="KW-1185">Reference proteome</keyword>
<keyword id="KW-0678">Repressor</keyword>
<keyword id="KW-0804">Transcription</keyword>
<keyword id="KW-0805">Transcription regulation</keyword>